<sequence length="178" mass="20699">MRKHLGGCWLAIVCILLFSQLCSVKARGIKHRIKWNRKVLPSTSQVTEARTAEIRPGAFIKQGRKLDIDFGVEGNRYYEANYWQFPDGIHYNGCSKANVTKEKFITSCINATQAANQEELSREKQDNKLYQRVLWQLIRELCSTKHCDFWLERGAGLRVTLDQPMMLCLLVFIWFIVK</sequence>
<name>PRND_BOVIN</name>
<comment type="function">
    <text evidence="2 3">Required for normal acrosome reaction and for normal male fertility (By similarity). Can bind Cu(2+) (By similarity).</text>
</comment>
<comment type="subcellular location">
    <subcellularLocation>
        <location evidence="2">Cell membrane</location>
        <topology evidence="2">Lipid-anchor</topology>
        <topology evidence="2">GPI-anchor</topology>
    </subcellularLocation>
</comment>
<comment type="tissue specificity">
    <text evidence="5">Strongly expressed in testis. Detected at low levels in ovary, spleen, kidney and mammary gland.</text>
</comment>
<comment type="domain">
    <text evidence="3">A short helical region is required and sufficient for Cu(2+) binding.</text>
</comment>
<comment type="PTM">
    <text evidence="2">N-glycosylated.</text>
</comment>
<comment type="PTM">
    <text evidence="3">O-glycosylated.</text>
</comment>
<comment type="similarity">
    <text evidence="9">Belongs to the prion family.</text>
</comment>
<proteinExistence type="evidence at transcript level"/>
<dbReference type="EMBL" id="AJ278011">
    <property type="protein sequence ID" value="CAC22320.1"/>
    <property type="molecule type" value="mRNA"/>
</dbReference>
<dbReference type="EMBL" id="DQ205538">
    <property type="protein sequence ID" value="AAK08629.1"/>
    <property type="molecule type" value="Genomic_DNA"/>
</dbReference>
<dbReference type="EMBL" id="AY944236">
    <property type="protein sequence ID" value="AAY21625.1"/>
    <property type="molecule type" value="Genomic_DNA"/>
</dbReference>
<dbReference type="EMBL" id="DQ408532">
    <property type="protein sequence ID" value="ABD63005.1"/>
    <property type="molecule type" value="Genomic_DNA"/>
</dbReference>
<dbReference type="EMBL" id="BC133367">
    <property type="protein sequence ID" value="AAI33368.1"/>
    <property type="molecule type" value="mRNA"/>
</dbReference>
<dbReference type="EMBL" id="AJ251332">
    <property type="protein sequence ID" value="CAB96195.1"/>
    <property type="molecule type" value="Genomic_DNA"/>
</dbReference>
<dbReference type="RefSeq" id="NP_776583.1">
    <property type="nucleotide sequence ID" value="NM_174158.2"/>
</dbReference>
<dbReference type="SMR" id="Q9GK16"/>
<dbReference type="FunCoup" id="Q9GK16">
    <property type="interactions" value="36"/>
</dbReference>
<dbReference type="STRING" id="9913.ENSBTAP00000014624"/>
<dbReference type="GlyCosmos" id="Q9GK16">
    <property type="glycosylation" value="2 sites, No reported glycans"/>
</dbReference>
<dbReference type="GlyGen" id="Q9GK16">
    <property type="glycosylation" value="2 sites"/>
</dbReference>
<dbReference type="PaxDb" id="9913-ENSBTAP00000014624"/>
<dbReference type="GeneID" id="281426"/>
<dbReference type="KEGG" id="bta:281426"/>
<dbReference type="CTD" id="23627"/>
<dbReference type="eggNOG" id="ENOG502RAT9">
    <property type="taxonomic scope" value="Eukaryota"/>
</dbReference>
<dbReference type="InParanoid" id="Q9GK16"/>
<dbReference type="OrthoDB" id="9523143at2759"/>
<dbReference type="Proteomes" id="UP000009136">
    <property type="component" value="Unplaced"/>
</dbReference>
<dbReference type="GO" id="GO:0009897">
    <property type="term" value="C:external side of plasma membrane"/>
    <property type="evidence" value="ECO:0000250"/>
    <property type="project" value="UniProtKB"/>
</dbReference>
<dbReference type="GO" id="GO:0005507">
    <property type="term" value="F:copper ion binding"/>
    <property type="evidence" value="ECO:0000250"/>
    <property type="project" value="UniProtKB"/>
</dbReference>
<dbReference type="GO" id="GO:0007340">
    <property type="term" value="P:acrosome reaction"/>
    <property type="evidence" value="ECO:0000250"/>
    <property type="project" value="UniProtKB"/>
</dbReference>
<dbReference type="GO" id="GO:0006878">
    <property type="term" value="P:intracellular copper ion homeostasis"/>
    <property type="evidence" value="ECO:0000318"/>
    <property type="project" value="GO_Central"/>
</dbReference>
<dbReference type="GO" id="GO:0051260">
    <property type="term" value="P:protein homooligomerization"/>
    <property type="evidence" value="ECO:0007669"/>
    <property type="project" value="InterPro"/>
</dbReference>
<dbReference type="FunFam" id="1.10.790.10:FF:000002">
    <property type="entry name" value="Prion-like protein doppel"/>
    <property type="match status" value="1"/>
</dbReference>
<dbReference type="Gene3D" id="1.10.790.10">
    <property type="entry name" value="Prion/Doppel protein, beta-ribbon domain"/>
    <property type="match status" value="1"/>
</dbReference>
<dbReference type="InterPro" id="IPR021566">
    <property type="entry name" value="Doppel"/>
</dbReference>
<dbReference type="InterPro" id="IPR036924">
    <property type="entry name" value="Prion/Doppel_b-ribbon_dom_sf"/>
</dbReference>
<dbReference type="InterPro" id="IPR022416">
    <property type="entry name" value="Prion/Doppel_prot_b-ribbon_dom"/>
</dbReference>
<dbReference type="PANTHER" id="PTHR15506">
    <property type="entry name" value="DOPPEL PRION"/>
    <property type="match status" value="1"/>
</dbReference>
<dbReference type="PANTHER" id="PTHR15506:SF0">
    <property type="entry name" value="PRION-LIKE PROTEIN DOPPEL"/>
    <property type="match status" value="1"/>
</dbReference>
<dbReference type="Pfam" id="PF11466">
    <property type="entry name" value="Doppel"/>
    <property type="match status" value="1"/>
</dbReference>
<dbReference type="Pfam" id="PF00377">
    <property type="entry name" value="Prion"/>
    <property type="match status" value="1"/>
</dbReference>
<dbReference type="SUPFAM" id="SSF54098">
    <property type="entry name" value="Prion-like"/>
    <property type="match status" value="1"/>
</dbReference>
<feature type="signal peptide" evidence="3">
    <location>
        <begin position="1"/>
        <end position="25"/>
    </location>
</feature>
<feature type="chain" id="PRO_0000025743" description="Prion-like protein doppel">
    <location>
        <begin position="26"/>
        <end position="154"/>
    </location>
</feature>
<feature type="propeptide" id="PRO_0000025744" description="Removed in mature form" evidence="1">
    <location>
        <begin position="155"/>
        <end position="178"/>
    </location>
</feature>
<feature type="region of interest" description="Flexible tail" evidence="1">
    <location>
        <begin position="27"/>
        <end position="50"/>
    </location>
</feature>
<feature type="region of interest" description="Globular" evidence="1">
    <location>
        <begin position="51"/>
        <end position="154"/>
    </location>
</feature>
<feature type="region of interest" description="Cu(2+) binding" evidence="3">
    <location>
        <begin position="124"/>
        <end position="141"/>
    </location>
</feature>
<feature type="lipid moiety-binding region" description="GPI-anchor amidated glycine" evidence="4">
    <location>
        <position position="154"/>
    </location>
</feature>
<feature type="glycosylation site" description="N-linked (GlcNAc...) asparagine" evidence="4">
    <location>
        <position position="98"/>
    </location>
</feature>
<feature type="glycosylation site" description="N-linked (GlcNAc...) asparagine" evidence="4">
    <location>
        <position position="110"/>
    </location>
</feature>
<feature type="disulfide bond" evidence="2">
    <location>
        <begin position="94"/>
        <end position="147"/>
    </location>
</feature>
<feature type="disulfide bond" evidence="2">
    <location>
        <begin position="108"/>
        <end position="142"/>
    </location>
</feature>
<feature type="sequence variant" description="In strain: Korean." evidence="6 7 8">
    <original>R</original>
    <variation>Q</variation>
    <location>
        <position position="132"/>
    </location>
</feature>
<feature type="sequence conflict" description="In Ref. 4; ABD63005." evidence="9" ref="4">
    <original>R</original>
    <variation>H</variation>
    <location>
        <position position="50"/>
    </location>
</feature>
<feature type="sequence conflict" description="In Ref. 4; ABD63005." evidence="9" ref="4">
    <original>H</original>
    <variation>Q</variation>
    <location>
        <position position="146"/>
    </location>
</feature>
<organism>
    <name type="scientific">Bos taurus</name>
    <name type="common">Bovine</name>
    <dbReference type="NCBI Taxonomy" id="9913"/>
    <lineage>
        <taxon>Eukaryota</taxon>
        <taxon>Metazoa</taxon>
        <taxon>Chordata</taxon>
        <taxon>Craniata</taxon>
        <taxon>Vertebrata</taxon>
        <taxon>Euteleostomi</taxon>
        <taxon>Mammalia</taxon>
        <taxon>Eutheria</taxon>
        <taxon>Laurasiatheria</taxon>
        <taxon>Artiodactyla</taxon>
        <taxon>Ruminantia</taxon>
        <taxon>Pecora</taxon>
        <taxon>Bovidae</taxon>
        <taxon>Bovinae</taxon>
        <taxon>Bos</taxon>
    </lineage>
</organism>
<reference key="1">
    <citation type="journal article" date="2001" name="Mamm. Genome">
        <title>The PrP-like protein Doppel gene in sheep and cattle: cDNA sequence and expression.</title>
        <authorList>
            <person name="Tranulis M.A."/>
            <person name="Espenes A."/>
            <person name="Comincini S."/>
            <person name="Skretting G."/>
            <person name="Harbitz I."/>
        </authorList>
    </citation>
    <scope>NUCLEOTIDE SEQUENCE [MRNA]</scope>
    <scope>TISSUE SPECIFICITY</scope>
    <source>
        <tissue>Testis</tissue>
    </source>
</reference>
<reference key="2">
    <citation type="journal article" date="2001" name="Mamm. Genome">
        <title>Genomic organization, comparative analysis, and genetic polymorphisms of the bovine and ovine prion Doppel genes (PRND).</title>
        <authorList>
            <person name="Comincini S."/>
            <person name="Foti M.G."/>
            <person name="Tranulis M.A."/>
            <person name="Hills D."/>
            <person name="Di Guardo G."/>
            <person name="Vaccari G."/>
            <person name="Williams J.L."/>
            <person name="Harbitz I."/>
            <person name="Ferretti L."/>
        </authorList>
    </citation>
    <scope>NUCLEOTIDE SEQUENCE [GENOMIC DNA]</scope>
</reference>
<reference key="3">
    <citation type="journal article" date="2006" name="Genomics">
        <title>Comparative genomic organization of the human and bovine PRNP locus.</title>
        <authorList>
            <person name="Choi S.-H."/>
            <person name="Kim I.-C."/>
            <person name="Kim D.-S."/>
            <person name="Kim D.-W."/>
            <person name="Chae S.-H."/>
            <person name="Choi H.-H."/>
            <person name="Choi I."/>
            <person name="Yeo J.-S."/>
            <person name="Song M.-N."/>
            <person name="Park H.-S."/>
        </authorList>
    </citation>
    <scope>NUCLEOTIDE SEQUENCE [GENOMIC DNA]</scope>
    <scope>VARIANT GLN-132</scope>
    <source>
        <strain>Korean</strain>
    </source>
</reference>
<reference key="4">
    <citation type="submission" date="2006-02" db="EMBL/GenBank/DDBJ databases">
        <title>Analysis and comparison of bovine, ovine and human doppel gene Prnd.</title>
        <authorList>
            <person name="Zhang J."/>
            <person name="Liu Y."/>
            <person name="Chen H."/>
            <person name="Jiang H."/>
            <person name="Lu W."/>
            <person name="Zhu X."/>
            <person name="Xie Q."/>
            <person name="Cai X."/>
            <person name="Liu X."/>
        </authorList>
    </citation>
    <scope>NUCLEOTIDE SEQUENCE [GENOMIC DNA]</scope>
    <scope>VARIANT GLN-132</scope>
</reference>
<reference key="5">
    <citation type="submission" date="2007-02" db="EMBL/GenBank/DDBJ databases">
        <authorList>
            <consortium name="NIH - Mammalian Gene Collection (MGC) project"/>
        </authorList>
    </citation>
    <scope>NUCLEOTIDE SEQUENCE [LARGE SCALE MRNA]</scope>
    <scope>VARIANT GLN-132</scope>
    <source>
        <strain>Hereford</strain>
        <tissue>Fetal muscle</tissue>
    </source>
</reference>
<reference key="6">
    <citation type="submission" date="1999-11" db="EMBL/GenBank/DDBJ databases">
        <title>Partial sequence of the bovine prion protein-like protein (doppel) gene (Prnd).</title>
        <authorList>
            <person name="Tranulis M.A."/>
            <person name="Brundtland E."/>
            <person name="Harbitz I."/>
        </authorList>
    </citation>
    <scope>NUCLEOTIDE SEQUENCE [GENOMIC DNA] OF 33-149</scope>
</reference>
<evidence type="ECO:0000250" key="1"/>
<evidence type="ECO:0000250" key="2">
    <source>
        <dbReference type="UniProtKB" id="Q9QUG3"/>
    </source>
</evidence>
<evidence type="ECO:0000250" key="3">
    <source>
        <dbReference type="UniProtKB" id="Q9UKY0"/>
    </source>
</evidence>
<evidence type="ECO:0000255" key="4"/>
<evidence type="ECO:0000269" key="5">
    <source>
    </source>
</evidence>
<evidence type="ECO:0000269" key="6">
    <source>
    </source>
</evidence>
<evidence type="ECO:0000269" key="7">
    <source ref="4"/>
</evidence>
<evidence type="ECO:0000269" key="8">
    <source ref="5"/>
</evidence>
<evidence type="ECO:0000305" key="9"/>
<gene>
    <name type="primary">PRND</name>
    <name type="synonym">DPL</name>
</gene>
<accession>Q9GK16</accession>
<accession>A2VDR5</accession>
<accession>Q27H90</accession>
<accession>Q29TT4</accession>
<accession>Q9MYW2</accession>
<protein>
    <recommendedName>
        <fullName>Prion-like protein doppel</fullName>
    </recommendedName>
    <alternativeName>
        <fullName>PrPLP</fullName>
    </alternativeName>
</protein>
<keyword id="KW-0034">Amyloid</keyword>
<keyword id="KW-1003">Cell membrane</keyword>
<keyword id="KW-0186">Copper</keyword>
<keyword id="KW-1015">Disulfide bond</keyword>
<keyword id="KW-0278">Fertilization</keyword>
<keyword id="KW-0325">Glycoprotein</keyword>
<keyword id="KW-0336">GPI-anchor</keyword>
<keyword id="KW-0449">Lipoprotein</keyword>
<keyword id="KW-0472">Membrane</keyword>
<keyword id="KW-0479">Metal-binding</keyword>
<keyword id="KW-0640">Prion</keyword>
<keyword id="KW-1185">Reference proteome</keyword>
<keyword id="KW-0732">Signal</keyword>